<protein>
    <recommendedName>
        <fullName evidence="1">2-isopropylmalate synthase</fullName>
        <ecNumber evidence="1">2.3.3.13</ecNumber>
    </recommendedName>
    <alternativeName>
        <fullName evidence="1">Alpha-IPM synthase</fullName>
    </alternativeName>
    <alternativeName>
        <fullName evidence="1">Alpha-isopropylmalate synthase</fullName>
    </alternativeName>
</protein>
<sequence>MSDQVIIFDTTLRDGEQALSASLTVKEKLQIAYALERLGVDVIEAGFPVSSPGDFESVRTIAQHIKNSRICGLSRAVAKDIDAAAEALKVAEAFRIHTFISTSTVHVQDKLRRSYDDVVEMGVKAVKHARKYTDDVEFSCEDAGRTPIDNLCRMVEAAINAGANTINIPDTVGYTVPGEFGGIVQTLFNRVPNIDKAIISVHCHDDLGMSVANSIAAVQAGARQVEGTINGIGERAGNCSLEEIAMILKTRSEYLGVHTNLKHDEIHRTSKLVSQLCNMPIQSNKAIVGANAFSHSSGIHQDGMLKNKNTYEIMTPESIGLKNQALNLTSRSGRAAVKSHMDEMGYKEDEYNLDTLYADFVKLADRKGQVFDYDLEALMHFANLRDEDDFYKLNYLSVQSGSVMATTSIKLLCGDEEKCEAAVGNGPVDALYQCIYKLTGYDIVLDKFDLTAKGEGEDGLGQADIIANYKGRKYHGTGLATDIIEASGQALLHVINSIHRADQIAEIKQKKVETV</sequence>
<reference key="1">
    <citation type="submission" date="2008-08" db="EMBL/GenBank/DDBJ databases">
        <title>Complete sequence of Vibrio fischeri strain MJ11.</title>
        <authorList>
            <person name="Mandel M.J."/>
            <person name="Stabb E.V."/>
            <person name="Ruby E.G."/>
            <person name="Ferriera S."/>
            <person name="Johnson J."/>
            <person name="Kravitz S."/>
            <person name="Beeson K."/>
            <person name="Sutton G."/>
            <person name="Rogers Y.-H."/>
            <person name="Friedman R."/>
            <person name="Frazier M."/>
            <person name="Venter J.C."/>
        </authorList>
    </citation>
    <scope>NUCLEOTIDE SEQUENCE [LARGE SCALE GENOMIC DNA]</scope>
    <source>
        <strain>MJ11</strain>
    </source>
</reference>
<gene>
    <name evidence="1" type="primary">leuA</name>
    <name type="ordered locus">VFMJ11_0283</name>
</gene>
<keyword id="KW-0028">Amino-acid biosynthesis</keyword>
<keyword id="KW-0100">Branched-chain amino acid biosynthesis</keyword>
<keyword id="KW-0963">Cytoplasm</keyword>
<keyword id="KW-0432">Leucine biosynthesis</keyword>
<keyword id="KW-0464">Manganese</keyword>
<keyword id="KW-0479">Metal-binding</keyword>
<keyword id="KW-0808">Transferase</keyword>
<organism>
    <name type="scientific">Aliivibrio fischeri (strain MJ11)</name>
    <name type="common">Vibrio fischeri</name>
    <dbReference type="NCBI Taxonomy" id="388396"/>
    <lineage>
        <taxon>Bacteria</taxon>
        <taxon>Pseudomonadati</taxon>
        <taxon>Pseudomonadota</taxon>
        <taxon>Gammaproteobacteria</taxon>
        <taxon>Vibrionales</taxon>
        <taxon>Vibrionaceae</taxon>
        <taxon>Aliivibrio</taxon>
    </lineage>
</organism>
<evidence type="ECO:0000255" key="1">
    <source>
        <dbReference type="HAMAP-Rule" id="MF_01025"/>
    </source>
</evidence>
<comment type="function">
    <text evidence="1">Catalyzes the condensation of the acetyl group of acetyl-CoA with 3-methyl-2-oxobutanoate (2-ketoisovalerate) to form 3-carboxy-3-hydroxy-4-methylpentanoate (2-isopropylmalate).</text>
</comment>
<comment type="catalytic activity">
    <reaction evidence="1">
        <text>3-methyl-2-oxobutanoate + acetyl-CoA + H2O = (2S)-2-isopropylmalate + CoA + H(+)</text>
        <dbReference type="Rhea" id="RHEA:21524"/>
        <dbReference type="ChEBI" id="CHEBI:1178"/>
        <dbReference type="ChEBI" id="CHEBI:11851"/>
        <dbReference type="ChEBI" id="CHEBI:15377"/>
        <dbReference type="ChEBI" id="CHEBI:15378"/>
        <dbReference type="ChEBI" id="CHEBI:57287"/>
        <dbReference type="ChEBI" id="CHEBI:57288"/>
        <dbReference type="EC" id="2.3.3.13"/>
    </reaction>
</comment>
<comment type="cofactor">
    <cofactor evidence="1">
        <name>Mn(2+)</name>
        <dbReference type="ChEBI" id="CHEBI:29035"/>
    </cofactor>
</comment>
<comment type="pathway">
    <text evidence="1">Amino-acid biosynthesis; L-leucine biosynthesis; L-leucine from 3-methyl-2-oxobutanoate: step 1/4.</text>
</comment>
<comment type="subunit">
    <text evidence="1">Homodimer.</text>
</comment>
<comment type="subcellular location">
    <subcellularLocation>
        <location evidence="1">Cytoplasm</location>
    </subcellularLocation>
</comment>
<comment type="similarity">
    <text evidence="1">Belongs to the alpha-IPM synthase/homocitrate synthase family. LeuA type 1 subfamily.</text>
</comment>
<proteinExistence type="inferred from homology"/>
<dbReference type="EC" id="2.3.3.13" evidence="1"/>
<dbReference type="EMBL" id="CP001139">
    <property type="protein sequence ID" value="ACH65003.1"/>
    <property type="molecule type" value="Genomic_DNA"/>
</dbReference>
<dbReference type="RefSeq" id="WP_012532762.1">
    <property type="nucleotide sequence ID" value="NC_011184.1"/>
</dbReference>
<dbReference type="SMR" id="B5FGH4"/>
<dbReference type="KEGG" id="vfm:VFMJ11_0283"/>
<dbReference type="HOGENOM" id="CLU_022158_0_1_6"/>
<dbReference type="UniPathway" id="UPA00048">
    <property type="reaction ID" value="UER00070"/>
</dbReference>
<dbReference type="Proteomes" id="UP000001857">
    <property type="component" value="Chromosome I"/>
</dbReference>
<dbReference type="GO" id="GO:0005829">
    <property type="term" value="C:cytosol"/>
    <property type="evidence" value="ECO:0007669"/>
    <property type="project" value="TreeGrafter"/>
</dbReference>
<dbReference type="GO" id="GO:0003852">
    <property type="term" value="F:2-isopropylmalate synthase activity"/>
    <property type="evidence" value="ECO:0007669"/>
    <property type="project" value="UniProtKB-UniRule"/>
</dbReference>
<dbReference type="GO" id="GO:0003985">
    <property type="term" value="F:acetyl-CoA C-acetyltransferase activity"/>
    <property type="evidence" value="ECO:0007669"/>
    <property type="project" value="UniProtKB-UniRule"/>
</dbReference>
<dbReference type="GO" id="GO:0030145">
    <property type="term" value="F:manganese ion binding"/>
    <property type="evidence" value="ECO:0007669"/>
    <property type="project" value="UniProtKB-UniRule"/>
</dbReference>
<dbReference type="GO" id="GO:0009098">
    <property type="term" value="P:L-leucine biosynthetic process"/>
    <property type="evidence" value="ECO:0007669"/>
    <property type="project" value="UniProtKB-UniRule"/>
</dbReference>
<dbReference type="CDD" id="cd07940">
    <property type="entry name" value="DRE_TIM_IPMS"/>
    <property type="match status" value="1"/>
</dbReference>
<dbReference type="FunFam" id="1.10.238.260:FF:000001">
    <property type="entry name" value="2-isopropylmalate synthase"/>
    <property type="match status" value="1"/>
</dbReference>
<dbReference type="FunFam" id="3.20.20.70:FF:000010">
    <property type="entry name" value="2-isopropylmalate synthase"/>
    <property type="match status" value="1"/>
</dbReference>
<dbReference type="FunFam" id="3.30.160.270:FF:000001">
    <property type="entry name" value="2-isopropylmalate synthase"/>
    <property type="match status" value="1"/>
</dbReference>
<dbReference type="Gene3D" id="1.10.238.260">
    <property type="match status" value="1"/>
</dbReference>
<dbReference type="Gene3D" id="3.30.160.270">
    <property type="match status" value="1"/>
</dbReference>
<dbReference type="Gene3D" id="3.20.20.70">
    <property type="entry name" value="Aldolase class I"/>
    <property type="match status" value="1"/>
</dbReference>
<dbReference type="HAMAP" id="MF_01025">
    <property type="entry name" value="LeuA_type1"/>
    <property type="match status" value="1"/>
</dbReference>
<dbReference type="InterPro" id="IPR050073">
    <property type="entry name" value="2-IPM_HCS-like"/>
</dbReference>
<dbReference type="InterPro" id="IPR013709">
    <property type="entry name" value="2-isopropylmalate_synth_dimer"/>
</dbReference>
<dbReference type="InterPro" id="IPR002034">
    <property type="entry name" value="AIPM/Hcit_synth_CS"/>
</dbReference>
<dbReference type="InterPro" id="IPR013785">
    <property type="entry name" value="Aldolase_TIM"/>
</dbReference>
<dbReference type="InterPro" id="IPR054691">
    <property type="entry name" value="LeuA/HCS_post-cat"/>
</dbReference>
<dbReference type="InterPro" id="IPR036230">
    <property type="entry name" value="LeuA_allosteric_dom_sf"/>
</dbReference>
<dbReference type="InterPro" id="IPR005671">
    <property type="entry name" value="LeuA_bact_synth"/>
</dbReference>
<dbReference type="InterPro" id="IPR000891">
    <property type="entry name" value="PYR_CT"/>
</dbReference>
<dbReference type="NCBIfam" id="TIGR00973">
    <property type="entry name" value="leuA_bact"/>
    <property type="match status" value="1"/>
</dbReference>
<dbReference type="NCBIfam" id="NF002084">
    <property type="entry name" value="PRK00915.1-1"/>
    <property type="match status" value="1"/>
</dbReference>
<dbReference type="NCBIfam" id="NF002086">
    <property type="entry name" value="PRK00915.1-3"/>
    <property type="match status" value="1"/>
</dbReference>
<dbReference type="PANTHER" id="PTHR10277:SF9">
    <property type="entry name" value="2-ISOPROPYLMALATE SYNTHASE 1, CHLOROPLASTIC-RELATED"/>
    <property type="match status" value="1"/>
</dbReference>
<dbReference type="PANTHER" id="PTHR10277">
    <property type="entry name" value="HOMOCITRATE SYNTHASE-RELATED"/>
    <property type="match status" value="1"/>
</dbReference>
<dbReference type="Pfam" id="PF22617">
    <property type="entry name" value="HCS_D2"/>
    <property type="match status" value="1"/>
</dbReference>
<dbReference type="Pfam" id="PF00682">
    <property type="entry name" value="HMGL-like"/>
    <property type="match status" value="1"/>
</dbReference>
<dbReference type="Pfam" id="PF08502">
    <property type="entry name" value="LeuA_dimer"/>
    <property type="match status" value="1"/>
</dbReference>
<dbReference type="SMART" id="SM00917">
    <property type="entry name" value="LeuA_dimer"/>
    <property type="match status" value="1"/>
</dbReference>
<dbReference type="SUPFAM" id="SSF110921">
    <property type="entry name" value="2-isopropylmalate synthase LeuA, allosteric (dimerisation) domain"/>
    <property type="match status" value="1"/>
</dbReference>
<dbReference type="SUPFAM" id="SSF51569">
    <property type="entry name" value="Aldolase"/>
    <property type="match status" value="1"/>
</dbReference>
<dbReference type="PROSITE" id="PS00815">
    <property type="entry name" value="AIPM_HOMOCIT_SYNTH_1"/>
    <property type="match status" value="1"/>
</dbReference>
<dbReference type="PROSITE" id="PS00816">
    <property type="entry name" value="AIPM_HOMOCIT_SYNTH_2"/>
    <property type="match status" value="1"/>
</dbReference>
<dbReference type="PROSITE" id="PS50991">
    <property type="entry name" value="PYR_CT"/>
    <property type="match status" value="1"/>
</dbReference>
<name>LEU1_ALIFM</name>
<accession>B5FGH4</accession>
<feature type="chain" id="PRO_1000149330" description="2-isopropylmalate synthase">
    <location>
        <begin position="1"/>
        <end position="515"/>
    </location>
</feature>
<feature type="domain" description="Pyruvate carboxyltransferase" evidence="1">
    <location>
        <begin position="5"/>
        <end position="267"/>
    </location>
</feature>
<feature type="region of interest" description="Regulatory domain" evidence="1">
    <location>
        <begin position="392"/>
        <end position="515"/>
    </location>
</feature>
<feature type="binding site" evidence="1">
    <location>
        <position position="14"/>
    </location>
    <ligand>
        <name>Mn(2+)</name>
        <dbReference type="ChEBI" id="CHEBI:29035"/>
    </ligand>
</feature>
<feature type="binding site" evidence="1">
    <location>
        <position position="202"/>
    </location>
    <ligand>
        <name>Mn(2+)</name>
        <dbReference type="ChEBI" id="CHEBI:29035"/>
    </ligand>
</feature>
<feature type="binding site" evidence="1">
    <location>
        <position position="204"/>
    </location>
    <ligand>
        <name>Mn(2+)</name>
        <dbReference type="ChEBI" id="CHEBI:29035"/>
    </ligand>
</feature>
<feature type="binding site" evidence="1">
    <location>
        <position position="238"/>
    </location>
    <ligand>
        <name>Mn(2+)</name>
        <dbReference type="ChEBI" id="CHEBI:29035"/>
    </ligand>
</feature>